<organism>
    <name type="scientific">Anthoceros angustus</name>
    <name type="common">Hornwort</name>
    <name type="synonym">Anthoceros formosae</name>
    <dbReference type="NCBI Taxonomy" id="48387"/>
    <lineage>
        <taxon>Eukaryota</taxon>
        <taxon>Viridiplantae</taxon>
        <taxon>Streptophyta</taxon>
        <taxon>Embryophyta</taxon>
        <taxon>Anthocerotophyta</taxon>
        <taxon>Anthocerotopsida</taxon>
        <taxon>Anthocerotidae</taxon>
        <taxon>Anthocerotales</taxon>
        <taxon>Anthocerotaceae</taxon>
        <taxon>Anthoceros</taxon>
    </lineage>
</organism>
<sequence length="492" mass="53161">MKTNYLILGVSTLISKNVGHISQIIGPVLDVTFPPGKMPNIYNSLIVRGQNPAGQEINVTCEVQQLLGNNKVRAVAMSATDGLTRGMKVTDTGAPLSVPVGEVTLGRIFNVLGEPVDNLGAIDVSTTFPIHRSAPAFTQLDTKLSIFETGIKVVDLLAPYRRGGKIGLFGGAGVGKTVLIMELINNIAKAHGGVSVFGGVGERTREGNDLYMEMKESKVINEQDISESKVALVYGQMNEPPGARMRVGLTALTMAEYFRDVNKQDVLLFIDNIFRFVQAGSEVSALLGRMPSAVGYQPTLSTEMGSLQERITSTKEGSITSIQAVYVPADDLTDPAPATTFAHLDATTVLSRGLAAKGIYPAVDPLDSTSTMLQPWIVGEEHYETAQGVKQTLQRYKELQDIIAILGLDELSEEDRLTVARARKIERFLSQPFFVAEVFTGSPGKYVSLIETIKGFQMILAGELDGLPEQAFYLVGNIDEVTAKAETLQMES</sequence>
<geneLocation type="chloroplast"/>
<keyword id="KW-0066">ATP synthesis</keyword>
<keyword id="KW-0067">ATP-binding</keyword>
<keyword id="KW-0139">CF(1)</keyword>
<keyword id="KW-0150">Chloroplast</keyword>
<keyword id="KW-0375">Hydrogen ion transport</keyword>
<keyword id="KW-0406">Ion transport</keyword>
<keyword id="KW-0472">Membrane</keyword>
<keyword id="KW-0547">Nucleotide-binding</keyword>
<keyword id="KW-0934">Plastid</keyword>
<keyword id="KW-0691">RNA editing</keyword>
<keyword id="KW-0793">Thylakoid</keyword>
<keyword id="KW-1278">Translocase</keyword>
<keyword id="KW-0813">Transport</keyword>
<comment type="function">
    <text evidence="1">Produces ATP from ADP in the presence of a proton gradient across the membrane. The catalytic sites are hosted primarily by the beta subunits.</text>
</comment>
<comment type="catalytic activity">
    <reaction evidence="1">
        <text>ATP + H2O + 4 H(+)(in) = ADP + phosphate + 5 H(+)(out)</text>
        <dbReference type="Rhea" id="RHEA:57720"/>
        <dbReference type="ChEBI" id="CHEBI:15377"/>
        <dbReference type="ChEBI" id="CHEBI:15378"/>
        <dbReference type="ChEBI" id="CHEBI:30616"/>
        <dbReference type="ChEBI" id="CHEBI:43474"/>
        <dbReference type="ChEBI" id="CHEBI:456216"/>
        <dbReference type="EC" id="7.1.2.2"/>
    </reaction>
</comment>
<comment type="subunit">
    <text evidence="1">F-type ATPases have 2 components, CF(1) - the catalytic core - and CF(0) - the membrane proton channel. CF(1) has five subunits: alpha(3), beta(3), gamma(1), delta(1), epsilon(1). CF(0) has four main subunits: a(1), b(1), b'(1) and c(9-12).</text>
</comment>
<comment type="subcellular location">
    <subcellularLocation>
        <location evidence="1">Plastid</location>
        <location evidence="1">Chloroplast thylakoid membrane</location>
        <topology evidence="1">Peripheral membrane protein</topology>
    </subcellularLocation>
</comment>
<comment type="RNA editing">
    <location>
        <position position="1" evidence="2 3 4 5"/>
    </location>
    <location>
        <position position="65" evidence="2 3 4 5"/>
    </location>
    <location>
        <position position="139" evidence="2 3 4 5"/>
    </location>
    <location>
        <position position="159" evidence="2 3 4 5"/>
    </location>
    <location>
        <position position="162" evidence="2 3 4 5"/>
    </location>
    <location>
        <position position="168" evidence="2 3 4 5"/>
    </location>
    <location>
        <position position="249" evidence="2 3 4 5"/>
    </location>
    <location>
        <position position="251" evidence="2 3 4 5"/>
    </location>
    <location>
        <position position="267" evidence="2 3 4 5"/>
    </location>
    <location>
        <position position="274" evidence="2 3 4 5"/>
    </location>
    <location>
        <position position="275" evidence="2 3 4 5"/>
    </location>
    <location>
        <position position="286" evidence="2 3 4 5"/>
    </location>
    <location>
        <position position="287" evidence="2 3 4 5"/>
    </location>
    <location>
        <position position="313" evidence="2 3 4 5"/>
    </location>
    <location>
        <position position="329" evidence="2 3 4 5"/>
    </location>
    <location>
        <position position="335" evidence="2 3 4 5"/>
    </location>
    <location>
        <position position="344" evidence="2 3 4 5"/>
    </location>
    <location>
        <position position="351" evidence="2 3 4 5"/>
    </location>
    <location>
        <position position="361" evidence="2 3 4 5"/>
    </location>
    <location>
        <position position="362" evidence="2 3 4 5"/>
    </location>
    <location>
        <position position="370" evidence="2 3 4 5"/>
    </location>
    <location>
        <position position="405" evidence="2 3 4 5"/>
    </location>
    <location>
        <position position="408" evidence="2 3 4 5"/>
    </location>
    <location>
        <position position="411" evidence="2 3 4 5"/>
    </location>
    <location>
        <position position="439" evidence="2 3 4 5"/>
    </location>
    <location>
        <position position="470" evidence="2 3 4 5"/>
    </location>
    <location>
        <position position="472" evidence="2 3 4 5"/>
    </location>
    <location>
        <position position="478" evidence="2 3 4 5"/>
    </location>
    <text>The initiator methionine is created by editing. The nonsense codons at positions 65, 139 and 470 are modified to sense codons.</text>
</comment>
<comment type="similarity">
    <text evidence="1">Belongs to the ATPase alpha/beta chains family.</text>
</comment>
<reference key="1">
    <citation type="journal article" date="1996" name="Nucleic Acids Res.">
        <title>Extensive RNA editing of U to C in addition to C to U substitution in the rbcL transcripts of hornwort chloroplasts and the origin of RNA editing in green plants.</title>
        <authorList>
            <person name="Yoshinaga K."/>
            <person name="Iinuma H."/>
            <person name="Masuzawa T."/>
            <person name="Ueda K."/>
        </authorList>
    </citation>
    <scope>NUCLEOTIDE SEQUENCE [MRNA]</scope>
    <scope>RNA EDITING</scope>
    <source>
        <tissue>Thallus</tissue>
    </source>
</reference>
<reference key="2">
    <citation type="journal article" date="1997" name="Nucleic Acids Res.">
        <title>Extensive RNA editing and possible double-stranded structures determining editing sites in the atpB transcripts of hornwort chloroplasts.</title>
        <authorList>
            <person name="Yoshinaga K."/>
            <person name="Kakehi T."/>
            <person name="Shima Y."/>
            <person name="Iinuma H."/>
            <person name="Masuzawa T."/>
            <person name="Ueno M."/>
        </authorList>
    </citation>
    <scope>NUCLEOTIDE SEQUENCE [MRNA]</scope>
    <scope>RNA EDITING</scope>
</reference>
<reference key="3">
    <citation type="journal article" date="2003" name="Nucleic Acids Res.">
        <title>The complete nucleotide sequence of the hornwort (Anthoceros formosae) chloroplast genome: insight into the earliest land plants.</title>
        <authorList>
            <person name="Kugita M."/>
            <person name="Kaneko A."/>
            <person name="Yamamoto Y."/>
            <person name="Takeya Y."/>
            <person name="Matsumoto T."/>
            <person name="Yoshinaga K."/>
        </authorList>
    </citation>
    <scope>NUCLEOTIDE SEQUENCE [LARGE SCALE GENOMIC DNA]</scope>
    <scope>RNA EDITING</scope>
</reference>
<reference key="4">
    <citation type="journal article" date="2003" name="Nucleic Acids Res.">
        <title>RNA editing in hornwort chloroplasts makes more than half the genes functional.</title>
        <authorList>
            <person name="Kugita M."/>
            <person name="Yamamoto Y."/>
            <person name="Fujikawa T."/>
            <person name="Matsumoto T."/>
            <person name="Yoshinaga K."/>
        </authorList>
    </citation>
    <scope>NUCLEOTIDE SEQUENCE [MRNA]</scope>
    <scope>RNA EDITING</scope>
    <source>
        <tissue>Thallus</tissue>
    </source>
</reference>
<protein>
    <recommendedName>
        <fullName evidence="1">ATP synthase subunit beta, chloroplastic</fullName>
        <ecNumber evidence="1">7.1.2.2</ecNumber>
    </recommendedName>
    <alternativeName>
        <fullName evidence="1">ATP synthase F1 sector subunit beta</fullName>
    </alternativeName>
    <alternativeName>
        <fullName evidence="1">F-ATPase subunit beta</fullName>
    </alternativeName>
</protein>
<feature type="chain" id="PRO_0000144495" description="ATP synthase subunit beta, chloroplastic">
    <location>
        <begin position="1"/>
        <end position="492"/>
    </location>
</feature>
<feature type="binding site" evidence="1">
    <location>
        <begin position="170"/>
        <end position="177"/>
    </location>
    <ligand>
        <name>ATP</name>
        <dbReference type="ChEBI" id="CHEBI:30616"/>
    </ligand>
</feature>
<dbReference type="EC" id="7.1.2.2" evidence="1"/>
<dbReference type="EMBL" id="D86545">
    <property type="protein sequence ID" value="BAA24160.1"/>
    <property type="molecule type" value="mRNA"/>
</dbReference>
<dbReference type="EMBL" id="D43695">
    <property type="protein sequence ID" value="BAA07795.1"/>
    <property type="molecule type" value="Genomic_DNA"/>
</dbReference>
<dbReference type="EMBL" id="AB086179">
    <property type="protein sequence ID" value="BAC55356.1"/>
    <property type="molecule type" value="Genomic_DNA"/>
</dbReference>
<dbReference type="EMBL" id="AB087448">
    <property type="protein sequence ID" value="BAC55452.1"/>
    <property type="molecule type" value="mRNA"/>
</dbReference>
<dbReference type="EMBL" id="AB087447">
    <property type="protein sequence ID" value="BAC55451.1"/>
    <property type="molecule type" value="mRNA"/>
</dbReference>
<dbReference type="PIR" id="S71146">
    <property type="entry name" value="S71146"/>
</dbReference>
<dbReference type="RefSeq" id="NP_777420.1">
    <property type="nucleotide sequence ID" value="NC_004543.1"/>
</dbReference>
<dbReference type="SMR" id="Q31794"/>
<dbReference type="GeneID" id="2553481"/>
<dbReference type="GO" id="GO:0009535">
    <property type="term" value="C:chloroplast thylakoid membrane"/>
    <property type="evidence" value="ECO:0007669"/>
    <property type="project" value="UniProtKB-SubCell"/>
</dbReference>
<dbReference type="GO" id="GO:0005739">
    <property type="term" value="C:mitochondrion"/>
    <property type="evidence" value="ECO:0007669"/>
    <property type="project" value="GOC"/>
</dbReference>
<dbReference type="GO" id="GO:0045259">
    <property type="term" value="C:proton-transporting ATP synthase complex"/>
    <property type="evidence" value="ECO:0007669"/>
    <property type="project" value="UniProtKB-KW"/>
</dbReference>
<dbReference type="GO" id="GO:0005524">
    <property type="term" value="F:ATP binding"/>
    <property type="evidence" value="ECO:0007669"/>
    <property type="project" value="UniProtKB-UniRule"/>
</dbReference>
<dbReference type="GO" id="GO:0016887">
    <property type="term" value="F:ATP hydrolysis activity"/>
    <property type="evidence" value="ECO:0007669"/>
    <property type="project" value="InterPro"/>
</dbReference>
<dbReference type="GO" id="GO:0046933">
    <property type="term" value="F:proton-transporting ATP synthase activity, rotational mechanism"/>
    <property type="evidence" value="ECO:0007669"/>
    <property type="project" value="UniProtKB-UniRule"/>
</dbReference>
<dbReference type="GO" id="GO:0042776">
    <property type="term" value="P:proton motive force-driven mitochondrial ATP synthesis"/>
    <property type="evidence" value="ECO:0007669"/>
    <property type="project" value="TreeGrafter"/>
</dbReference>
<dbReference type="CDD" id="cd18110">
    <property type="entry name" value="ATP-synt_F1_beta_C"/>
    <property type="match status" value="1"/>
</dbReference>
<dbReference type="CDD" id="cd18115">
    <property type="entry name" value="ATP-synt_F1_beta_N"/>
    <property type="match status" value="1"/>
</dbReference>
<dbReference type="CDD" id="cd01133">
    <property type="entry name" value="F1-ATPase_beta_CD"/>
    <property type="match status" value="1"/>
</dbReference>
<dbReference type="FunFam" id="1.10.1140.10:FF:000001">
    <property type="entry name" value="ATP synthase subunit beta"/>
    <property type="match status" value="1"/>
</dbReference>
<dbReference type="FunFam" id="3.40.50.12240:FF:000006">
    <property type="entry name" value="ATP synthase subunit beta"/>
    <property type="match status" value="1"/>
</dbReference>
<dbReference type="FunFam" id="3.40.50.300:FF:000004">
    <property type="entry name" value="ATP synthase subunit beta"/>
    <property type="match status" value="1"/>
</dbReference>
<dbReference type="FunFam" id="2.40.10.170:FF:000002">
    <property type="entry name" value="ATP synthase subunit beta, chloroplastic"/>
    <property type="match status" value="1"/>
</dbReference>
<dbReference type="Gene3D" id="2.40.10.170">
    <property type="match status" value="1"/>
</dbReference>
<dbReference type="Gene3D" id="1.10.1140.10">
    <property type="entry name" value="Bovine Mitochondrial F1-atpase, Atp Synthase Beta Chain, Chain D, domain 3"/>
    <property type="match status" value="1"/>
</dbReference>
<dbReference type="Gene3D" id="3.40.50.300">
    <property type="entry name" value="P-loop containing nucleotide triphosphate hydrolases"/>
    <property type="match status" value="1"/>
</dbReference>
<dbReference type="HAMAP" id="MF_01347">
    <property type="entry name" value="ATP_synth_beta_bact"/>
    <property type="match status" value="1"/>
</dbReference>
<dbReference type="InterPro" id="IPR003593">
    <property type="entry name" value="AAA+_ATPase"/>
</dbReference>
<dbReference type="InterPro" id="IPR055190">
    <property type="entry name" value="ATP-synt_VA_C"/>
</dbReference>
<dbReference type="InterPro" id="IPR005722">
    <property type="entry name" value="ATP_synth_F1_bsu"/>
</dbReference>
<dbReference type="InterPro" id="IPR020003">
    <property type="entry name" value="ATPase_a/bsu_AS"/>
</dbReference>
<dbReference type="InterPro" id="IPR050053">
    <property type="entry name" value="ATPase_alpha/beta_chains"/>
</dbReference>
<dbReference type="InterPro" id="IPR004100">
    <property type="entry name" value="ATPase_F1/V1/A1_a/bsu_N"/>
</dbReference>
<dbReference type="InterPro" id="IPR036121">
    <property type="entry name" value="ATPase_F1/V1/A1_a/bsu_N_sf"/>
</dbReference>
<dbReference type="InterPro" id="IPR000194">
    <property type="entry name" value="ATPase_F1/V1/A1_a/bsu_nucl-bd"/>
</dbReference>
<dbReference type="InterPro" id="IPR024034">
    <property type="entry name" value="ATPase_F1/V1_b/a_C"/>
</dbReference>
<dbReference type="InterPro" id="IPR027417">
    <property type="entry name" value="P-loop_NTPase"/>
</dbReference>
<dbReference type="NCBIfam" id="TIGR01039">
    <property type="entry name" value="atpD"/>
    <property type="match status" value="1"/>
</dbReference>
<dbReference type="PANTHER" id="PTHR15184">
    <property type="entry name" value="ATP SYNTHASE"/>
    <property type="match status" value="1"/>
</dbReference>
<dbReference type="PANTHER" id="PTHR15184:SF71">
    <property type="entry name" value="ATP SYNTHASE SUBUNIT BETA, MITOCHONDRIAL"/>
    <property type="match status" value="1"/>
</dbReference>
<dbReference type="Pfam" id="PF00006">
    <property type="entry name" value="ATP-synt_ab"/>
    <property type="match status" value="1"/>
</dbReference>
<dbReference type="Pfam" id="PF02874">
    <property type="entry name" value="ATP-synt_ab_N"/>
    <property type="match status" value="1"/>
</dbReference>
<dbReference type="Pfam" id="PF22919">
    <property type="entry name" value="ATP-synt_VA_C"/>
    <property type="match status" value="1"/>
</dbReference>
<dbReference type="SMART" id="SM00382">
    <property type="entry name" value="AAA"/>
    <property type="match status" value="1"/>
</dbReference>
<dbReference type="SUPFAM" id="SSF47917">
    <property type="entry name" value="C-terminal domain of alpha and beta subunits of F1 ATP synthase"/>
    <property type="match status" value="1"/>
</dbReference>
<dbReference type="SUPFAM" id="SSF50615">
    <property type="entry name" value="N-terminal domain of alpha and beta subunits of F1 ATP synthase"/>
    <property type="match status" value="1"/>
</dbReference>
<dbReference type="SUPFAM" id="SSF52540">
    <property type="entry name" value="P-loop containing nucleoside triphosphate hydrolases"/>
    <property type="match status" value="1"/>
</dbReference>
<dbReference type="PROSITE" id="PS00152">
    <property type="entry name" value="ATPASE_ALPHA_BETA"/>
    <property type="match status" value="1"/>
</dbReference>
<accession>Q31794</accession>
<accession>O49837</accession>
<accession>Q85UU1</accession>
<gene>
    <name evidence="1" type="primary">atpB</name>
</gene>
<evidence type="ECO:0000255" key="1">
    <source>
        <dbReference type="HAMAP-Rule" id="MF_01347"/>
    </source>
</evidence>
<evidence type="ECO:0000269" key="2">
    <source>
    </source>
</evidence>
<evidence type="ECO:0000269" key="3">
    <source>
    </source>
</evidence>
<evidence type="ECO:0000269" key="4">
    <source>
    </source>
</evidence>
<evidence type="ECO:0000269" key="5">
    <source>
    </source>
</evidence>
<name>ATPB_ANTAG</name>
<proteinExistence type="evidence at transcript level"/>